<sequence length="525" mass="60580">MLWLWLGLSGQKLLLWGAASAVSVAGATVLLNILQMLVSYARKWQQMRPIPSVARAYPLVGHALFMKPNNTEFFQQIIQYTEEFRHLPIIKLWIGPVPLVALYKAENVEVILTSSKQIDKSFMYKFLQPWLGLGLLTSTGSKWRARRKMLTPSFHFTILEDFLDVMNEQANILVNKLEKHVNQEAFNCFFPITLCALDIICETAMGKNIGAQSNGDSEYVRTVYRMSDMIYRRMKMPWFWFDLWYLMFKEGRDHKKGLKSLHTFTNNVIAERVNARKAEQDCIGAGRGPLPSKTKRKAFLDLLLSVTDEEGNKLSHEDIREEVDTFMFEGHDTTAAAINWSLYLLGSNPEVQRKVDKELDDVFGRSHRPVTLEDLKKLKYLDCVIKETLRVFPSVPLFARSLSEDCEVAGYKISKGTEAVIIPYALHRDPRYFPDPEEFQPERFFPENSQGRHPYAYVPFSAGPRNCIGQKFAVMEEKTILACILREFWIESNQKREELGLAGDLILRPNNGIWIKLKRRHEDDP</sequence>
<accession>A2RRT9</accession>
<comment type="function">
    <text evidence="2">A cytochrome P450 monooxygenase involved in fatty acid metabolism in the eye. Catalyzes the omega-hydroxylation of polyunsaturated fatty acids (PUFAs) docosahexaenoate (DHA) and its precursor eicosapentaenoate (EPA), and may contribute to the homeostasis of these retinal PUFAs. Omega hydroxylates saturated fatty acids such as laurate, myristate and palmitate, the catalytic efficiency decreasing in the following order: myristate &gt; laurate &gt; palmitate (C14&gt;C12&gt;C16). Mechanistically, uses molecular oxygen inserting one oxygen atom into a substrate, and reducing the second into a water molecule, with two electrons provided by NADPH via cytochrome P450 reductase (CPR; NADPH-ferrihemoprotein reductase).</text>
</comment>
<comment type="catalytic activity">
    <reaction evidence="2">
        <text>dodecanoate + reduced [NADPH--hemoprotein reductase] + O2 = 12-hydroxydodecanoate + oxidized [NADPH--hemoprotein reductase] + H2O + H(+)</text>
        <dbReference type="Rhea" id="RHEA:38947"/>
        <dbReference type="Rhea" id="RHEA-COMP:11964"/>
        <dbReference type="Rhea" id="RHEA-COMP:11965"/>
        <dbReference type="ChEBI" id="CHEBI:15377"/>
        <dbReference type="ChEBI" id="CHEBI:15378"/>
        <dbReference type="ChEBI" id="CHEBI:15379"/>
        <dbReference type="ChEBI" id="CHEBI:18262"/>
        <dbReference type="ChEBI" id="CHEBI:36204"/>
        <dbReference type="ChEBI" id="CHEBI:57618"/>
        <dbReference type="ChEBI" id="CHEBI:58210"/>
    </reaction>
    <physiologicalReaction direction="left-to-right" evidence="2">
        <dbReference type="Rhea" id="RHEA:38948"/>
    </physiologicalReaction>
</comment>
<comment type="catalytic activity">
    <reaction evidence="2">
        <text>tetradecanoate + reduced [NADPH--hemoprotein reductase] + O2 = 14-hydroxytetradecanoate + oxidized [NADPH--hemoprotein reductase] + H2O + H(+)</text>
        <dbReference type="Rhea" id="RHEA:40203"/>
        <dbReference type="Rhea" id="RHEA-COMP:11964"/>
        <dbReference type="Rhea" id="RHEA-COMP:11965"/>
        <dbReference type="ChEBI" id="CHEBI:15377"/>
        <dbReference type="ChEBI" id="CHEBI:15378"/>
        <dbReference type="ChEBI" id="CHEBI:15379"/>
        <dbReference type="ChEBI" id="CHEBI:30807"/>
        <dbReference type="ChEBI" id="CHEBI:57618"/>
        <dbReference type="ChEBI" id="CHEBI:58210"/>
        <dbReference type="ChEBI" id="CHEBI:77033"/>
    </reaction>
    <physiologicalReaction direction="left-to-right" evidence="2">
        <dbReference type="Rhea" id="RHEA:40204"/>
    </physiologicalReaction>
</comment>
<comment type="catalytic activity">
    <reaction evidence="2">
        <text>hexadecanoate + reduced [NADPH--hemoprotein reductase] + O2 = 16-hydroxyhexadecanoate + oxidized [NADPH--hemoprotein reductase] + H2O + H(+)</text>
        <dbReference type="Rhea" id="RHEA:40199"/>
        <dbReference type="Rhea" id="RHEA-COMP:11964"/>
        <dbReference type="Rhea" id="RHEA-COMP:11965"/>
        <dbReference type="ChEBI" id="CHEBI:7896"/>
        <dbReference type="ChEBI" id="CHEBI:15377"/>
        <dbReference type="ChEBI" id="CHEBI:15378"/>
        <dbReference type="ChEBI" id="CHEBI:15379"/>
        <dbReference type="ChEBI" id="CHEBI:55329"/>
        <dbReference type="ChEBI" id="CHEBI:57618"/>
        <dbReference type="ChEBI" id="CHEBI:58210"/>
        <dbReference type="EC" id="1.14.14.80"/>
    </reaction>
    <physiologicalReaction direction="left-to-right" evidence="2">
        <dbReference type="Rhea" id="RHEA:40200"/>
    </physiologicalReaction>
</comment>
<comment type="catalytic activity">
    <reaction evidence="2">
        <text>(5Z,8Z,11Z,14Z,17Z)-eicosapentaenoate + reduced [NADPH--hemoprotein reductase] + O2 = 20-hydroxy-(5Z,8Z,11Z,14Z,17Z)-eicosapentaenoate + oxidized [NADPH--hemoprotein reductase] + H2O + H(+)</text>
        <dbReference type="Rhea" id="RHEA:39791"/>
        <dbReference type="Rhea" id="RHEA-COMP:11964"/>
        <dbReference type="Rhea" id="RHEA-COMP:11965"/>
        <dbReference type="ChEBI" id="CHEBI:15377"/>
        <dbReference type="ChEBI" id="CHEBI:15378"/>
        <dbReference type="ChEBI" id="CHEBI:15379"/>
        <dbReference type="ChEBI" id="CHEBI:57618"/>
        <dbReference type="ChEBI" id="CHEBI:58210"/>
        <dbReference type="ChEBI" id="CHEBI:58562"/>
        <dbReference type="ChEBI" id="CHEBI:76639"/>
    </reaction>
    <physiologicalReaction direction="left-to-right" evidence="2">
        <dbReference type="Rhea" id="RHEA:39792"/>
    </physiologicalReaction>
</comment>
<comment type="catalytic activity">
    <reaction evidence="2">
        <text>(4Z,7Z,10Z,13Z,16Z,19Z)-docosahexaenoate + reduced [NADPH--hemoprotein reductase] + O2 = 22-hydroxy-(4Z,7Z,10Z,13Z,16Z,19Z)-docosahexaenoate + oxidized [NADPH--hemoprotein reductase] + H2O + H(+)</text>
        <dbReference type="Rhea" id="RHEA:40155"/>
        <dbReference type="Rhea" id="RHEA-COMP:11964"/>
        <dbReference type="Rhea" id="RHEA-COMP:11965"/>
        <dbReference type="ChEBI" id="CHEBI:15377"/>
        <dbReference type="ChEBI" id="CHEBI:15378"/>
        <dbReference type="ChEBI" id="CHEBI:15379"/>
        <dbReference type="ChEBI" id="CHEBI:57618"/>
        <dbReference type="ChEBI" id="CHEBI:58210"/>
        <dbReference type="ChEBI" id="CHEBI:77015"/>
        <dbReference type="ChEBI" id="CHEBI:77016"/>
        <dbReference type="EC" id="1.14.14.79"/>
    </reaction>
    <physiologicalReaction direction="left-to-right" evidence="2">
        <dbReference type="Rhea" id="RHEA:40156"/>
    </physiologicalReaction>
</comment>
<comment type="cofactor">
    <cofactor evidence="1">
        <name>heme</name>
        <dbReference type="ChEBI" id="CHEBI:30413"/>
    </cofactor>
</comment>
<comment type="activity regulation">
    <text evidence="2">Inhibited by N-hydroxy-N'-(4-n-butyl-2-methylphenyl formamidine)(HET0016) with an IC(50) of 38 nM.</text>
</comment>
<comment type="pathway">
    <text evidence="2">Lipid metabolism; fatty acid metabolism.</text>
</comment>
<comment type="subcellular location">
    <subcellularLocation>
        <location evidence="2">Endoplasmic reticulum membrane</location>
        <topology evidence="4">Single-pass membrane protein</topology>
    </subcellularLocation>
</comment>
<comment type="similarity">
    <text evidence="3">Belongs to the cytochrome P450 family.</text>
</comment>
<keyword id="KW-0256">Endoplasmic reticulum</keyword>
<keyword id="KW-0349">Heme</keyword>
<keyword id="KW-0408">Iron</keyword>
<keyword id="KW-0443">Lipid metabolism</keyword>
<keyword id="KW-0472">Membrane</keyword>
<keyword id="KW-0479">Metal-binding</keyword>
<keyword id="KW-0503">Monooxygenase</keyword>
<keyword id="KW-0521">NADP</keyword>
<keyword id="KW-0560">Oxidoreductase</keyword>
<keyword id="KW-1185">Reference proteome</keyword>
<keyword id="KW-0812">Transmembrane</keyword>
<keyword id="KW-1133">Transmembrane helix</keyword>
<organism>
    <name type="scientific">Rattus norvegicus</name>
    <name type="common">Rat</name>
    <dbReference type="NCBI Taxonomy" id="10116"/>
    <lineage>
        <taxon>Eukaryota</taxon>
        <taxon>Metazoa</taxon>
        <taxon>Chordata</taxon>
        <taxon>Craniata</taxon>
        <taxon>Vertebrata</taxon>
        <taxon>Euteleostomi</taxon>
        <taxon>Mammalia</taxon>
        <taxon>Eutheria</taxon>
        <taxon>Euarchontoglires</taxon>
        <taxon>Glires</taxon>
        <taxon>Rodentia</taxon>
        <taxon>Myomorpha</taxon>
        <taxon>Muroidea</taxon>
        <taxon>Muridae</taxon>
        <taxon>Murinae</taxon>
        <taxon>Rattus</taxon>
    </lineage>
</organism>
<reference evidence="5" key="1">
    <citation type="journal article" date="2004" name="Genome Res.">
        <title>The status, quality, and expansion of the NIH full-length cDNA project: the Mammalian Gene Collection (MGC).</title>
        <authorList>
            <consortium name="The MGC Project Team"/>
        </authorList>
    </citation>
    <scope>NUCLEOTIDE SEQUENCE [LARGE SCALE MRNA]</scope>
    <source>
        <tissue evidence="5">Lung</tissue>
    </source>
</reference>
<feature type="chain" id="PRO_0000311708" description="Cytochrome P450 4V2">
    <location>
        <begin position="1"/>
        <end position="525"/>
    </location>
</feature>
<feature type="transmembrane region" description="Helical" evidence="3">
    <location>
        <begin position="13"/>
        <end position="33"/>
    </location>
</feature>
<feature type="binding site" description="covalent" evidence="1">
    <location>
        <position position="329"/>
    </location>
    <ligand>
        <name>heme</name>
        <dbReference type="ChEBI" id="CHEBI:30413"/>
    </ligand>
</feature>
<feature type="binding site" description="axial binding residue" evidence="1">
    <location>
        <position position="467"/>
    </location>
    <ligand>
        <name>heme</name>
        <dbReference type="ChEBI" id="CHEBI:30413"/>
    </ligand>
    <ligandPart>
        <name>Fe</name>
        <dbReference type="ChEBI" id="CHEBI:18248"/>
    </ligandPart>
</feature>
<gene>
    <name type="primary">Cyp4v2</name>
    <name type="synonym">Cyp4v3</name>
</gene>
<protein>
    <recommendedName>
        <fullName>Cytochrome P450 4V2</fullName>
    </recommendedName>
    <alternativeName>
        <fullName evidence="2">Docosahexaenoic acid omega-hydroxylase CYP4V2</fullName>
        <ecNumber evidence="2">1.14.14.79</ecNumber>
    </alternativeName>
    <alternativeName>
        <fullName evidence="2">Long-chain fatty acid omega-monooxygenase</fullName>
        <ecNumber evidence="2">1.14.14.80</ecNumber>
    </alternativeName>
</protein>
<dbReference type="EC" id="1.14.14.79" evidence="2"/>
<dbReference type="EC" id="1.14.14.80" evidence="2"/>
<dbReference type="EMBL" id="BC131846">
    <property type="protein sequence ID" value="AAI31847.1"/>
    <property type="molecule type" value="mRNA"/>
</dbReference>
<dbReference type="RefSeq" id="NP_001129072.1">
    <property type="nucleotide sequence ID" value="NM_001135600.1"/>
</dbReference>
<dbReference type="SMR" id="A2RRT9"/>
<dbReference type="FunCoup" id="A2RRT9">
    <property type="interactions" value="253"/>
</dbReference>
<dbReference type="STRING" id="10116.ENSRNOP00000019302"/>
<dbReference type="PhosphoSitePlus" id="A2RRT9"/>
<dbReference type="PaxDb" id="10116-ENSRNOP00000019302"/>
<dbReference type="PeptideAtlas" id="A2RRT9"/>
<dbReference type="Ensembl" id="ENSRNOT00000019302.7">
    <property type="protein sequence ID" value="ENSRNOP00000019302.4"/>
    <property type="gene ID" value="ENSRNOG00000042426.3"/>
</dbReference>
<dbReference type="GeneID" id="266761"/>
<dbReference type="KEGG" id="rno:266761"/>
<dbReference type="AGR" id="RGD:708530"/>
<dbReference type="CTD" id="102294"/>
<dbReference type="RGD" id="708530">
    <property type="gene designation" value="Cyp4v3"/>
</dbReference>
<dbReference type="eggNOG" id="KOG0157">
    <property type="taxonomic scope" value="Eukaryota"/>
</dbReference>
<dbReference type="GeneTree" id="ENSGT00940000157278"/>
<dbReference type="HOGENOM" id="CLU_001570_5_1_1"/>
<dbReference type="InParanoid" id="A2RRT9"/>
<dbReference type="OMA" id="QQMHLFS"/>
<dbReference type="OrthoDB" id="1470350at2759"/>
<dbReference type="PhylomeDB" id="A2RRT9"/>
<dbReference type="TreeFam" id="TF105088"/>
<dbReference type="Reactome" id="R-RNO-211976">
    <property type="pathway name" value="Endogenous sterols"/>
</dbReference>
<dbReference type="Reactome" id="R-RNO-2453902">
    <property type="pathway name" value="The canonical retinoid cycle in rods (twilight vision)"/>
</dbReference>
<dbReference type="UniPathway" id="UPA00199"/>
<dbReference type="PRO" id="PR:A2RRT9"/>
<dbReference type="Proteomes" id="UP000002494">
    <property type="component" value="Chromosome 16"/>
</dbReference>
<dbReference type="Bgee" id="ENSRNOG00000042426">
    <property type="expression patterns" value="Expressed in liver and 19 other cell types or tissues"/>
</dbReference>
<dbReference type="GO" id="GO:0005789">
    <property type="term" value="C:endoplasmic reticulum membrane"/>
    <property type="evidence" value="ECO:0000250"/>
    <property type="project" value="UniProtKB"/>
</dbReference>
<dbReference type="GO" id="GO:0020037">
    <property type="term" value="F:heme binding"/>
    <property type="evidence" value="ECO:0007669"/>
    <property type="project" value="InterPro"/>
</dbReference>
<dbReference type="GO" id="GO:0005506">
    <property type="term" value="F:iron ion binding"/>
    <property type="evidence" value="ECO:0007669"/>
    <property type="project" value="InterPro"/>
</dbReference>
<dbReference type="GO" id="GO:0102033">
    <property type="term" value="F:long-chain fatty acid omega-hydroxylase activity"/>
    <property type="evidence" value="ECO:0007669"/>
    <property type="project" value="UniProtKB-EC"/>
</dbReference>
<dbReference type="GO" id="GO:0010430">
    <property type="term" value="P:fatty acid omega-oxidation"/>
    <property type="evidence" value="ECO:0000250"/>
    <property type="project" value="UniProtKB"/>
</dbReference>
<dbReference type="CDD" id="cd20680">
    <property type="entry name" value="CYP4V"/>
    <property type="match status" value="1"/>
</dbReference>
<dbReference type="FunFam" id="1.10.630.10:FF:000035">
    <property type="entry name" value="CYtochrome P450 family"/>
    <property type="match status" value="1"/>
</dbReference>
<dbReference type="Gene3D" id="1.10.630.10">
    <property type="entry name" value="Cytochrome P450"/>
    <property type="match status" value="1"/>
</dbReference>
<dbReference type="InterPro" id="IPR001128">
    <property type="entry name" value="Cyt_P450"/>
</dbReference>
<dbReference type="InterPro" id="IPR017972">
    <property type="entry name" value="Cyt_P450_CS"/>
</dbReference>
<dbReference type="InterPro" id="IPR002401">
    <property type="entry name" value="Cyt_P450_E_grp-I"/>
</dbReference>
<dbReference type="InterPro" id="IPR036396">
    <property type="entry name" value="Cyt_P450_sf"/>
</dbReference>
<dbReference type="InterPro" id="IPR050196">
    <property type="entry name" value="Cytochrome_P450_Monoox"/>
</dbReference>
<dbReference type="PANTHER" id="PTHR24291:SF193">
    <property type="entry name" value="CYTOCHROME P450 4V2"/>
    <property type="match status" value="1"/>
</dbReference>
<dbReference type="PANTHER" id="PTHR24291">
    <property type="entry name" value="CYTOCHROME P450 FAMILY 4"/>
    <property type="match status" value="1"/>
</dbReference>
<dbReference type="Pfam" id="PF00067">
    <property type="entry name" value="p450"/>
    <property type="match status" value="1"/>
</dbReference>
<dbReference type="PRINTS" id="PR00463">
    <property type="entry name" value="EP450I"/>
</dbReference>
<dbReference type="PRINTS" id="PR00385">
    <property type="entry name" value="P450"/>
</dbReference>
<dbReference type="SUPFAM" id="SSF48264">
    <property type="entry name" value="Cytochrome P450"/>
    <property type="match status" value="1"/>
</dbReference>
<dbReference type="PROSITE" id="PS00086">
    <property type="entry name" value="CYTOCHROME_P450"/>
    <property type="match status" value="1"/>
</dbReference>
<name>CP4V2_RAT</name>
<proteinExistence type="evidence at transcript level"/>
<evidence type="ECO:0000250" key="1">
    <source>
        <dbReference type="UniProtKB" id="P51869"/>
    </source>
</evidence>
<evidence type="ECO:0000250" key="2">
    <source>
        <dbReference type="UniProtKB" id="Q6ZWL3"/>
    </source>
</evidence>
<evidence type="ECO:0000255" key="3"/>
<evidence type="ECO:0000305" key="4"/>
<evidence type="ECO:0000312" key="5">
    <source>
        <dbReference type="EMBL" id="AAI31847.1"/>
    </source>
</evidence>